<evidence type="ECO:0000255" key="1">
    <source>
        <dbReference type="HAMAP-Rule" id="MF_00191"/>
    </source>
</evidence>
<protein>
    <recommendedName>
        <fullName evidence="1">4-hydroxy-3-methylbut-2-enyl diphosphate reductase</fullName>
        <shortName evidence="1">HMBPP reductase</shortName>
        <ecNumber evidence="1">1.17.7.4</ecNumber>
    </recommendedName>
</protein>
<proteinExistence type="inferred from homology"/>
<organism>
    <name type="scientific">Paracoccus denitrificans (strain Pd 1222)</name>
    <dbReference type="NCBI Taxonomy" id="318586"/>
    <lineage>
        <taxon>Bacteria</taxon>
        <taxon>Pseudomonadati</taxon>
        <taxon>Pseudomonadota</taxon>
        <taxon>Alphaproteobacteria</taxon>
        <taxon>Rhodobacterales</taxon>
        <taxon>Paracoccaceae</taxon>
        <taxon>Paracoccus</taxon>
    </lineage>
</organism>
<name>ISPH_PARDP</name>
<feature type="chain" id="PRO_1000058509" description="4-hydroxy-3-methylbut-2-enyl diphosphate reductase">
    <location>
        <begin position="1"/>
        <end position="316"/>
    </location>
</feature>
<feature type="active site" description="Proton donor" evidence="1">
    <location>
        <position position="132"/>
    </location>
</feature>
<feature type="binding site" evidence="1">
    <location>
        <position position="18"/>
    </location>
    <ligand>
        <name>[4Fe-4S] cluster</name>
        <dbReference type="ChEBI" id="CHEBI:49883"/>
    </ligand>
</feature>
<feature type="binding site" evidence="1">
    <location>
        <position position="47"/>
    </location>
    <ligand>
        <name>(2E)-4-hydroxy-3-methylbut-2-enyl diphosphate</name>
        <dbReference type="ChEBI" id="CHEBI:128753"/>
    </ligand>
</feature>
<feature type="binding site" evidence="1">
    <location>
        <position position="47"/>
    </location>
    <ligand>
        <name>dimethylallyl diphosphate</name>
        <dbReference type="ChEBI" id="CHEBI:57623"/>
    </ligand>
</feature>
<feature type="binding site" evidence="1">
    <location>
        <position position="47"/>
    </location>
    <ligand>
        <name>isopentenyl diphosphate</name>
        <dbReference type="ChEBI" id="CHEBI:128769"/>
    </ligand>
</feature>
<feature type="binding site" evidence="1">
    <location>
        <position position="80"/>
    </location>
    <ligand>
        <name>(2E)-4-hydroxy-3-methylbut-2-enyl diphosphate</name>
        <dbReference type="ChEBI" id="CHEBI:128753"/>
    </ligand>
</feature>
<feature type="binding site" evidence="1">
    <location>
        <position position="80"/>
    </location>
    <ligand>
        <name>dimethylallyl diphosphate</name>
        <dbReference type="ChEBI" id="CHEBI:57623"/>
    </ligand>
</feature>
<feature type="binding site" evidence="1">
    <location>
        <position position="80"/>
    </location>
    <ligand>
        <name>isopentenyl diphosphate</name>
        <dbReference type="ChEBI" id="CHEBI:128769"/>
    </ligand>
</feature>
<feature type="binding site" evidence="1">
    <location>
        <position position="102"/>
    </location>
    <ligand>
        <name>[4Fe-4S] cluster</name>
        <dbReference type="ChEBI" id="CHEBI:49883"/>
    </ligand>
</feature>
<feature type="binding site" evidence="1">
    <location>
        <position position="130"/>
    </location>
    <ligand>
        <name>(2E)-4-hydroxy-3-methylbut-2-enyl diphosphate</name>
        <dbReference type="ChEBI" id="CHEBI:128753"/>
    </ligand>
</feature>
<feature type="binding site" evidence="1">
    <location>
        <position position="130"/>
    </location>
    <ligand>
        <name>dimethylallyl diphosphate</name>
        <dbReference type="ChEBI" id="CHEBI:57623"/>
    </ligand>
</feature>
<feature type="binding site" evidence="1">
    <location>
        <position position="130"/>
    </location>
    <ligand>
        <name>isopentenyl diphosphate</name>
        <dbReference type="ChEBI" id="CHEBI:128769"/>
    </ligand>
</feature>
<feature type="binding site" evidence="1">
    <location>
        <position position="171"/>
    </location>
    <ligand>
        <name>(2E)-4-hydroxy-3-methylbut-2-enyl diphosphate</name>
        <dbReference type="ChEBI" id="CHEBI:128753"/>
    </ligand>
</feature>
<feature type="binding site" evidence="1">
    <location>
        <position position="201"/>
    </location>
    <ligand>
        <name>[4Fe-4S] cluster</name>
        <dbReference type="ChEBI" id="CHEBI:49883"/>
    </ligand>
</feature>
<feature type="binding site" evidence="1">
    <location>
        <position position="229"/>
    </location>
    <ligand>
        <name>(2E)-4-hydroxy-3-methylbut-2-enyl diphosphate</name>
        <dbReference type="ChEBI" id="CHEBI:128753"/>
    </ligand>
</feature>
<feature type="binding site" evidence="1">
    <location>
        <position position="229"/>
    </location>
    <ligand>
        <name>dimethylallyl diphosphate</name>
        <dbReference type="ChEBI" id="CHEBI:57623"/>
    </ligand>
</feature>
<feature type="binding site" evidence="1">
    <location>
        <position position="229"/>
    </location>
    <ligand>
        <name>isopentenyl diphosphate</name>
        <dbReference type="ChEBI" id="CHEBI:128769"/>
    </ligand>
</feature>
<feature type="binding site" evidence="1">
    <location>
        <position position="230"/>
    </location>
    <ligand>
        <name>(2E)-4-hydroxy-3-methylbut-2-enyl diphosphate</name>
        <dbReference type="ChEBI" id="CHEBI:128753"/>
    </ligand>
</feature>
<feature type="binding site" evidence="1">
    <location>
        <position position="230"/>
    </location>
    <ligand>
        <name>dimethylallyl diphosphate</name>
        <dbReference type="ChEBI" id="CHEBI:57623"/>
    </ligand>
</feature>
<feature type="binding site" evidence="1">
    <location>
        <position position="230"/>
    </location>
    <ligand>
        <name>isopentenyl diphosphate</name>
        <dbReference type="ChEBI" id="CHEBI:128769"/>
    </ligand>
</feature>
<feature type="binding site" evidence="1">
    <location>
        <position position="231"/>
    </location>
    <ligand>
        <name>(2E)-4-hydroxy-3-methylbut-2-enyl diphosphate</name>
        <dbReference type="ChEBI" id="CHEBI:128753"/>
    </ligand>
</feature>
<feature type="binding site" evidence="1">
    <location>
        <position position="231"/>
    </location>
    <ligand>
        <name>dimethylallyl diphosphate</name>
        <dbReference type="ChEBI" id="CHEBI:57623"/>
    </ligand>
</feature>
<feature type="binding site" evidence="1">
    <location>
        <position position="231"/>
    </location>
    <ligand>
        <name>isopentenyl diphosphate</name>
        <dbReference type="ChEBI" id="CHEBI:128769"/>
    </ligand>
</feature>
<feature type="binding site" evidence="1">
    <location>
        <position position="274"/>
    </location>
    <ligand>
        <name>(2E)-4-hydroxy-3-methylbut-2-enyl diphosphate</name>
        <dbReference type="ChEBI" id="CHEBI:128753"/>
    </ligand>
</feature>
<feature type="binding site" evidence="1">
    <location>
        <position position="274"/>
    </location>
    <ligand>
        <name>dimethylallyl diphosphate</name>
        <dbReference type="ChEBI" id="CHEBI:57623"/>
    </ligand>
</feature>
<feature type="binding site" evidence="1">
    <location>
        <position position="274"/>
    </location>
    <ligand>
        <name>isopentenyl diphosphate</name>
        <dbReference type="ChEBI" id="CHEBI:128769"/>
    </ligand>
</feature>
<reference key="1">
    <citation type="submission" date="2006-12" db="EMBL/GenBank/DDBJ databases">
        <title>Complete sequence of chromosome 2 of Paracoccus denitrificans PD1222.</title>
        <authorList>
            <person name="Copeland A."/>
            <person name="Lucas S."/>
            <person name="Lapidus A."/>
            <person name="Barry K."/>
            <person name="Detter J.C."/>
            <person name="Glavina del Rio T."/>
            <person name="Hammon N."/>
            <person name="Israni S."/>
            <person name="Dalin E."/>
            <person name="Tice H."/>
            <person name="Pitluck S."/>
            <person name="Munk A.C."/>
            <person name="Brettin T."/>
            <person name="Bruce D."/>
            <person name="Han C."/>
            <person name="Tapia R."/>
            <person name="Gilna P."/>
            <person name="Schmutz J."/>
            <person name="Larimer F."/>
            <person name="Land M."/>
            <person name="Hauser L."/>
            <person name="Kyrpides N."/>
            <person name="Lykidis A."/>
            <person name="Spiro S."/>
            <person name="Richardson D.J."/>
            <person name="Moir J.W.B."/>
            <person name="Ferguson S.J."/>
            <person name="van Spanning R.J.M."/>
            <person name="Richardson P."/>
        </authorList>
    </citation>
    <scope>NUCLEOTIDE SEQUENCE [LARGE SCALE GENOMIC DNA]</scope>
    <source>
        <strain>Pd 1222</strain>
    </source>
</reference>
<comment type="function">
    <text evidence="1">Catalyzes the conversion of 1-hydroxy-2-methyl-2-(E)-butenyl 4-diphosphate (HMBPP) into a mixture of isopentenyl diphosphate (IPP) and dimethylallyl diphosphate (DMAPP). Acts in the terminal step of the DOXP/MEP pathway for isoprenoid precursor biosynthesis.</text>
</comment>
<comment type="catalytic activity">
    <reaction evidence="1">
        <text>isopentenyl diphosphate + 2 oxidized [2Fe-2S]-[ferredoxin] + H2O = (2E)-4-hydroxy-3-methylbut-2-enyl diphosphate + 2 reduced [2Fe-2S]-[ferredoxin] + 2 H(+)</text>
        <dbReference type="Rhea" id="RHEA:24488"/>
        <dbReference type="Rhea" id="RHEA-COMP:10000"/>
        <dbReference type="Rhea" id="RHEA-COMP:10001"/>
        <dbReference type="ChEBI" id="CHEBI:15377"/>
        <dbReference type="ChEBI" id="CHEBI:15378"/>
        <dbReference type="ChEBI" id="CHEBI:33737"/>
        <dbReference type="ChEBI" id="CHEBI:33738"/>
        <dbReference type="ChEBI" id="CHEBI:128753"/>
        <dbReference type="ChEBI" id="CHEBI:128769"/>
        <dbReference type="EC" id="1.17.7.4"/>
    </reaction>
</comment>
<comment type="catalytic activity">
    <reaction evidence="1">
        <text>dimethylallyl diphosphate + 2 oxidized [2Fe-2S]-[ferredoxin] + H2O = (2E)-4-hydroxy-3-methylbut-2-enyl diphosphate + 2 reduced [2Fe-2S]-[ferredoxin] + 2 H(+)</text>
        <dbReference type="Rhea" id="RHEA:24825"/>
        <dbReference type="Rhea" id="RHEA-COMP:10000"/>
        <dbReference type="Rhea" id="RHEA-COMP:10001"/>
        <dbReference type="ChEBI" id="CHEBI:15377"/>
        <dbReference type="ChEBI" id="CHEBI:15378"/>
        <dbReference type="ChEBI" id="CHEBI:33737"/>
        <dbReference type="ChEBI" id="CHEBI:33738"/>
        <dbReference type="ChEBI" id="CHEBI:57623"/>
        <dbReference type="ChEBI" id="CHEBI:128753"/>
        <dbReference type="EC" id="1.17.7.4"/>
    </reaction>
</comment>
<comment type="cofactor">
    <cofactor evidence="1">
        <name>[4Fe-4S] cluster</name>
        <dbReference type="ChEBI" id="CHEBI:49883"/>
    </cofactor>
    <text evidence="1">Binds 1 [4Fe-4S] cluster per subunit.</text>
</comment>
<comment type="pathway">
    <text evidence="1">Isoprenoid biosynthesis; dimethylallyl diphosphate biosynthesis; dimethylallyl diphosphate from (2E)-4-hydroxy-3-methylbutenyl diphosphate: step 1/1.</text>
</comment>
<comment type="pathway">
    <text evidence="1">Isoprenoid biosynthesis; isopentenyl diphosphate biosynthesis via DXP pathway; isopentenyl diphosphate from 1-deoxy-D-xylulose 5-phosphate: step 6/6.</text>
</comment>
<comment type="similarity">
    <text evidence="1">Belongs to the IspH family.</text>
</comment>
<keyword id="KW-0004">4Fe-4S</keyword>
<keyword id="KW-0408">Iron</keyword>
<keyword id="KW-0411">Iron-sulfur</keyword>
<keyword id="KW-0414">Isoprene biosynthesis</keyword>
<keyword id="KW-0479">Metal-binding</keyword>
<keyword id="KW-0560">Oxidoreductase</keyword>
<keyword id="KW-1185">Reference proteome</keyword>
<accession>A1B842</accession>
<sequence>MDKKPPLTLYLAAPRGFCAGVDRAIKIVEMALQKWGAPVYVRHEIVHNKFVVDSLRDKGAVFVEELDDVPSDRPVIFSAHGVPKAVPAEARRREMVFVDATCPLVSKVHVEAERHHAEGLQMVMIGHAGHPEVLGTMGQLPEGEVLLVETVEDVARIEPRDPGRLAFITQTTLSVDDTAAIVAALQARFPGIRGPAKEDICYATTNRQASVKAIAGRIDALLVIGAPNSSNSRRLVEVGSAAGCAYSQLVMRADQIDWRAIAGARAVGVTAGASAPEVLVDEVVAAFHARYDLTVEMVETARENVEFKVPRVLREA</sequence>
<dbReference type="EC" id="1.17.7.4" evidence="1"/>
<dbReference type="EMBL" id="CP000490">
    <property type="protein sequence ID" value="ABL71686.1"/>
    <property type="molecule type" value="Genomic_DNA"/>
</dbReference>
<dbReference type="RefSeq" id="WP_011749855.1">
    <property type="nucleotide sequence ID" value="NC_008687.1"/>
</dbReference>
<dbReference type="SMR" id="A1B842"/>
<dbReference type="STRING" id="318586.Pden_3619"/>
<dbReference type="EnsemblBacteria" id="ABL71686">
    <property type="protein sequence ID" value="ABL71686"/>
    <property type="gene ID" value="Pden_3619"/>
</dbReference>
<dbReference type="GeneID" id="93453273"/>
<dbReference type="KEGG" id="pde:Pden_3619"/>
<dbReference type="eggNOG" id="COG0761">
    <property type="taxonomic scope" value="Bacteria"/>
</dbReference>
<dbReference type="HOGENOM" id="CLU_027486_1_0_5"/>
<dbReference type="OrthoDB" id="9804068at2"/>
<dbReference type="UniPathway" id="UPA00056">
    <property type="reaction ID" value="UER00097"/>
</dbReference>
<dbReference type="UniPathway" id="UPA00059">
    <property type="reaction ID" value="UER00105"/>
</dbReference>
<dbReference type="Proteomes" id="UP000000361">
    <property type="component" value="Chromosome 2"/>
</dbReference>
<dbReference type="GO" id="GO:0051539">
    <property type="term" value="F:4 iron, 4 sulfur cluster binding"/>
    <property type="evidence" value="ECO:0007669"/>
    <property type="project" value="UniProtKB-UniRule"/>
</dbReference>
<dbReference type="GO" id="GO:0051745">
    <property type="term" value="F:4-hydroxy-3-methylbut-2-enyl diphosphate reductase activity"/>
    <property type="evidence" value="ECO:0007669"/>
    <property type="project" value="UniProtKB-UniRule"/>
</dbReference>
<dbReference type="GO" id="GO:0046872">
    <property type="term" value="F:metal ion binding"/>
    <property type="evidence" value="ECO:0007669"/>
    <property type="project" value="UniProtKB-KW"/>
</dbReference>
<dbReference type="GO" id="GO:0050992">
    <property type="term" value="P:dimethylallyl diphosphate biosynthetic process"/>
    <property type="evidence" value="ECO:0007669"/>
    <property type="project" value="UniProtKB-UniRule"/>
</dbReference>
<dbReference type="GO" id="GO:0019288">
    <property type="term" value="P:isopentenyl diphosphate biosynthetic process, methylerythritol 4-phosphate pathway"/>
    <property type="evidence" value="ECO:0007669"/>
    <property type="project" value="UniProtKB-UniRule"/>
</dbReference>
<dbReference type="GO" id="GO:0016114">
    <property type="term" value="P:terpenoid biosynthetic process"/>
    <property type="evidence" value="ECO:0007669"/>
    <property type="project" value="UniProtKB-UniRule"/>
</dbReference>
<dbReference type="CDD" id="cd13944">
    <property type="entry name" value="lytB_ispH"/>
    <property type="match status" value="1"/>
</dbReference>
<dbReference type="Gene3D" id="3.40.50.11270">
    <property type="match status" value="1"/>
</dbReference>
<dbReference type="Gene3D" id="3.40.1010.20">
    <property type="entry name" value="4-hydroxy-3-methylbut-2-enyl diphosphate reductase, catalytic domain"/>
    <property type="match status" value="2"/>
</dbReference>
<dbReference type="HAMAP" id="MF_00191">
    <property type="entry name" value="IspH"/>
    <property type="match status" value="1"/>
</dbReference>
<dbReference type="InterPro" id="IPR003451">
    <property type="entry name" value="LytB/IspH"/>
</dbReference>
<dbReference type="NCBIfam" id="TIGR00216">
    <property type="entry name" value="ispH_lytB"/>
    <property type="match status" value="1"/>
</dbReference>
<dbReference type="NCBIfam" id="NF002188">
    <property type="entry name" value="PRK01045.1-2"/>
    <property type="match status" value="1"/>
</dbReference>
<dbReference type="NCBIfam" id="NF002190">
    <property type="entry name" value="PRK01045.1-4"/>
    <property type="match status" value="1"/>
</dbReference>
<dbReference type="PANTHER" id="PTHR30426">
    <property type="entry name" value="4-HYDROXY-3-METHYLBUT-2-ENYL DIPHOSPHATE REDUCTASE"/>
    <property type="match status" value="1"/>
</dbReference>
<dbReference type="PANTHER" id="PTHR30426:SF0">
    <property type="entry name" value="4-HYDROXY-3-METHYLBUT-2-ENYL DIPHOSPHATE REDUCTASE"/>
    <property type="match status" value="1"/>
</dbReference>
<dbReference type="Pfam" id="PF02401">
    <property type="entry name" value="LYTB"/>
    <property type="match status" value="1"/>
</dbReference>
<gene>
    <name evidence="1" type="primary">ispH</name>
    <name type="ordered locus">Pden_3619</name>
</gene>